<sequence length="505" mass="56807">MAESAGASSFFPLVVLLLAGSGGSGPRGVQALLCACTSCLQANYTCETDGACMVSIFNLDGMEHHVRTCIPKVELVPAGKPFYCLSSEDLRNTHCCYTDYCNRIDLRVPSGHLKEPEHPSMWGPVELVGIIAGPVFLLFLIIIIVFLVINYHQRVYHNRQRLDMEDPSCEMCLSKDKTLQDLVYDLSTSGSGSGLPLFVQRTVARTIVLQEIIGKGRFGEVWRGRWRGGDVAVKIFSSREERSWFREAEIYQTVMLRHENILGFIAADNKDNGTWTQLWLVSDYHEHGSLFDYLNRYTVTIEGMIKLALSAASGLAHLHMEIVGTQGKPGIAHRDLKSKNILVKKNGMCAIADLGLAVRHDAVTDTIDIAPNQRVGTKRYMAPEVLDETINMKHFDSFKCADIYALGLVYWEIARRCNSGGVHEEYQLPYYDLVPSDPSIEEMRKVVCDQKLRPNIPNWWQSYEALRVMGKMMRECWYANGAARLTALRIKKTLSQLSVQEDVKI</sequence>
<feature type="signal peptide" evidence="3">
    <location>
        <begin position="1"/>
        <end position="23"/>
    </location>
</feature>
<feature type="chain" id="PRO_0000024417" description="Activin receptor type-1B">
    <location>
        <begin position="24"/>
        <end position="505"/>
    </location>
</feature>
<feature type="topological domain" description="Extracellular" evidence="3">
    <location>
        <begin position="24"/>
        <end position="126"/>
    </location>
</feature>
<feature type="transmembrane region" description="Helical" evidence="3">
    <location>
        <begin position="127"/>
        <end position="149"/>
    </location>
</feature>
<feature type="topological domain" description="Cytoplasmic" evidence="3">
    <location>
        <begin position="150"/>
        <end position="505"/>
    </location>
</feature>
<feature type="domain" description="GS" evidence="5">
    <location>
        <begin position="177"/>
        <end position="206"/>
    </location>
</feature>
<feature type="domain" description="Protein kinase" evidence="4">
    <location>
        <begin position="207"/>
        <end position="497"/>
    </location>
</feature>
<feature type="active site" description="Proton acceptor" evidence="4 6">
    <location>
        <position position="335"/>
    </location>
</feature>
<feature type="binding site" evidence="4">
    <location>
        <begin position="213"/>
        <end position="221"/>
    </location>
    <ligand>
        <name>ATP</name>
        <dbReference type="ChEBI" id="CHEBI:30616"/>
    </ligand>
</feature>
<feature type="binding site" evidence="4">
    <location>
        <position position="234"/>
    </location>
    <ligand>
        <name>ATP</name>
        <dbReference type="ChEBI" id="CHEBI:30616"/>
    </ligand>
</feature>
<feature type="modified residue" description="Phosphotyrosine" evidence="10">
    <location>
        <position position="380"/>
    </location>
</feature>
<feature type="glycosylation site" description="N-linked (GlcNAc...) asparagine" evidence="3">
    <location>
        <position position="43"/>
    </location>
</feature>
<feature type="splice variant" id="VSP_041841" description="In isoform 5." evidence="24">
    <location>
        <begin position="1"/>
        <end position="52"/>
    </location>
</feature>
<feature type="splice variant" id="VSP_041842" description="In isoform 4." evidence="24">
    <original>D</original>
    <variation>ADCSFLTLPWEVVMVSAAPKLRSLRLQYKGGRGRARFLFPLN</variation>
    <location>
        <position position="271"/>
    </location>
</feature>
<feature type="splice variant" id="VSP_004953" description="In isoform 3." evidence="25">
    <original>VHEEYQLPYYDLVPSDPSIEEMRKVVCDQKLRPNIPNWWQSYEALRVMGKMMRECWYANGAARLTALRIKKTLSQLSVQEDVKI</original>
    <variation>TFLFCLCSYLPFQDAGSPKAVLLPPFFLQPVGCLLPEPESSFKVAIKGVEVAVLRVRLFFRDQFVE</variation>
    <location>
        <begin position="422"/>
        <end position="505"/>
    </location>
</feature>
<feature type="splice variant" id="VSP_004954" description="In isoform 2." evidence="25">
    <original>ALRVMGKMMRECWYANGAARLTALRIKKTLSQLSVQEDVKI</original>
    <variation>VRSWPPAAFPSA</variation>
    <location>
        <begin position="465"/>
        <end position="505"/>
    </location>
</feature>
<feature type="sequence variant" id="VAR_041406" description="In dbSNP:rs34488074." evidence="15">
    <original>F</original>
    <variation>L</variation>
    <location>
        <position position="146"/>
    </location>
</feature>
<feature type="sequence variant" id="VAR_011716" description="In dbSNP:rs928906.">
    <original>L</original>
    <variation>V</variation>
    <location>
        <position position="408"/>
    </location>
</feature>
<feature type="mutagenesis site" description="Increases binding to activin." evidence="13">
    <original>L</original>
    <variation>A</variation>
    <location>
        <position position="40"/>
    </location>
</feature>
<feature type="mutagenesis site" description="Decreases binding to activin." evidence="13">
    <original>I</original>
    <variation>A</variation>
    <location>
        <position position="70"/>
    </location>
</feature>
<feature type="mutagenesis site" description="Increases binding to activin." evidence="13">
    <original>V</original>
    <variation>A</variation>
    <location>
        <position position="73"/>
    </location>
</feature>
<feature type="mutagenesis site" description="Decreases binding to activin." evidence="13">
    <original>L</original>
    <variation>A</variation>
    <location>
        <position position="75"/>
    </location>
</feature>
<feature type="mutagenesis site" description="Decreases binding to activin." evidence="13">
    <original>P</original>
    <variation>A</variation>
    <location>
        <position position="77"/>
    </location>
</feature>
<feature type="mutagenesis site" description="Leads to constitutive activation." evidence="21">
    <original>T</original>
    <variation>V</variation>
    <location>
        <position position="206"/>
    </location>
</feature>
<feature type="sequence conflict" description="In Ref. 3; AAA60555/AAA60556." evidence="26" ref="3">
    <original>I</original>
    <variation>F</variation>
    <location>
        <position position="56"/>
    </location>
</feature>
<feature type="sequence conflict" description="In Ref. 3; AAA60555/AAA60556." evidence="26" ref="3">
    <original>WR</original>
    <variation>MA</variation>
    <location>
        <begin position="222"/>
        <end position="223"/>
    </location>
</feature>
<feature type="strand" evidence="28">
    <location>
        <begin position="32"/>
        <end position="34"/>
    </location>
</feature>
<feature type="helix" evidence="27">
    <location>
        <begin position="40"/>
        <end position="42"/>
    </location>
</feature>
<feature type="strand" evidence="27">
    <location>
        <begin position="49"/>
        <end position="55"/>
    </location>
</feature>
<feature type="strand" evidence="27">
    <location>
        <begin position="60"/>
        <end position="62"/>
    </location>
</feature>
<feature type="strand" evidence="27">
    <location>
        <begin position="66"/>
        <end position="70"/>
    </location>
</feature>
<feature type="turn" evidence="27">
    <location>
        <begin position="72"/>
        <end position="74"/>
    </location>
</feature>
<feature type="strand" evidence="27">
    <location>
        <begin position="77"/>
        <end position="80"/>
    </location>
</feature>
<feature type="helix" evidence="27">
    <location>
        <begin position="82"/>
        <end position="84"/>
    </location>
</feature>
<feature type="turn" evidence="28">
    <location>
        <begin position="88"/>
        <end position="90"/>
    </location>
</feature>
<feature type="strand" evidence="27">
    <location>
        <begin position="94"/>
        <end position="96"/>
    </location>
</feature>
<feature type="sequence variant" id="VAR_082894" description="In dbSNP:rs34050429." evidence="26">
    <original>R</original>
    <variation>H</variation>
    <location sequence="P36896-3">
        <position position="478"/>
    </location>
</feature>
<gene>
    <name type="primary">ACVR1B</name>
    <name type="synonym">ACVRLK4</name>
    <name type="synonym">ALK4</name>
</gene>
<reference key="1">
    <citation type="journal article" date="1993" name="Oncogene">
        <title>Activin receptor-like kinases: a novel subclass of cell-surface receptors with predicted serine/threonine kinase activity.</title>
        <authorList>
            <person name="ten Dijke P."/>
            <person name="Ichijo H."/>
            <person name="Franzen P."/>
            <person name="Schulz P."/>
            <person name="Saras J."/>
            <person name="Toyoshima H."/>
            <person name="Heldin C.-H."/>
            <person name="Miyazono K."/>
        </authorList>
    </citation>
    <scope>NUCLEOTIDE SEQUENCE [MRNA] (ISOFORM 1)</scope>
    <source>
        <tissue>Placenta</tissue>
    </source>
</reference>
<reference key="2">
    <citation type="journal article" date="1994" name="Mol. Cell. Biol.">
        <title>Type I receptors specify growth-inhibitory and transcriptional responses to transforming growth factor beta and activin.</title>
        <authorList>
            <person name="Carcamo J."/>
            <person name="Weis F.M."/>
            <person name="Ventura F."/>
            <person name="Wieser R."/>
            <person name="Wrana J.L."/>
            <person name="Attisano L."/>
            <person name="Massague J."/>
        </authorList>
    </citation>
    <scope>NUCLEOTIDE SEQUENCE [MRNA] (ISOFORM 1)</scope>
    <scope>IDENTIFICATION IN AN ACTIVIN RECEPTOR COMPLEX</scope>
    <scope>ACTIVIN-BINDING</scope>
    <scope>FUNCTION</scope>
    <source>
        <tissue>Kidney</tissue>
    </source>
</reference>
<reference key="3">
    <citation type="journal article" date="1994" name="Proc. Natl. Acad. Sci. U.S.A.">
        <title>Genomic structure and cloned cDNAs predict that four variants in the kinase domain of serine/threonine kinase receptors arise by alternative splicing and poly(A) addition.</title>
        <authorList>
            <person name="Xu J."/>
            <person name="Matsuzaki K."/>
            <person name="McKeehan K."/>
            <person name="Wang F."/>
            <person name="Kan M."/>
            <person name="McKeehan W.L."/>
        </authorList>
    </citation>
    <scope>NUCLEOTIDE SEQUENCE [GENOMIC DNA / MRNA] (ISOFORMS 2 AND 3)</scope>
    <scope>ALTERNATIVE SPLICING</scope>
    <source>
        <tissue>Liver</tissue>
    </source>
</reference>
<reference key="4">
    <citation type="submission" date="2003-05" db="EMBL/GenBank/DDBJ databases">
        <title>Cloning of human full-length CDSs in BD Creator(TM) system donor vector.</title>
        <authorList>
            <person name="Kalnine N."/>
            <person name="Chen X."/>
            <person name="Rolfs A."/>
            <person name="Halleck A."/>
            <person name="Hines L."/>
            <person name="Eisenstein S."/>
            <person name="Koundinya M."/>
            <person name="Raphael J."/>
            <person name="Moreira D."/>
            <person name="Kelley T."/>
            <person name="LaBaer J."/>
            <person name="Lin Y."/>
            <person name="Phelan M."/>
            <person name="Farmer A."/>
        </authorList>
    </citation>
    <scope>NUCLEOTIDE SEQUENCE [LARGE SCALE MRNA] (ISOFORM 1)</scope>
</reference>
<reference key="5">
    <citation type="journal article" date="2004" name="Nat. Genet.">
        <title>Complete sequencing and characterization of 21,243 full-length human cDNAs.</title>
        <authorList>
            <person name="Ota T."/>
            <person name="Suzuki Y."/>
            <person name="Nishikawa T."/>
            <person name="Otsuki T."/>
            <person name="Sugiyama T."/>
            <person name="Irie R."/>
            <person name="Wakamatsu A."/>
            <person name="Hayashi K."/>
            <person name="Sato H."/>
            <person name="Nagai K."/>
            <person name="Kimura K."/>
            <person name="Makita H."/>
            <person name="Sekine M."/>
            <person name="Obayashi M."/>
            <person name="Nishi T."/>
            <person name="Shibahara T."/>
            <person name="Tanaka T."/>
            <person name="Ishii S."/>
            <person name="Yamamoto J."/>
            <person name="Saito K."/>
            <person name="Kawai Y."/>
            <person name="Isono Y."/>
            <person name="Nakamura Y."/>
            <person name="Nagahari K."/>
            <person name="Murakami K."/>
            <person name="Yasuda T."/>
            <person name="Iwayanagi T."/>
            <person name="Wagatsuma M."/>
            <person name="Shiratori A."/>
            <person name="Sudo H."/>
            <person name="Hosoiri T."/>
            <person name="Kaku Y."/>
            <person name="Kodaira H."/>
            <person name="Kondo H."/>
            <person name="Sugawara M."/>
            <person name="Takahashi M."/>
            <person name="Kanda K."/>
            <person name="Yokoi T."/>
            <person name="Furuya T."/>
            <person name="Kikkawa E."/>
            <person name="Omura Y."/>
            <person name="Abe K."/>
            <person name="Kamihara K."/>
            <person name="Katsuta N."/>
            <person name="Sato K."/>
            <person name="Tanikawa M."/>
            <person name="Yamazaki M."/>
            <person name="Ninomiya K."/>
            <person name="Ishibashi T."/>
            <person name="Yamashita H."/>
            <person name="Murakawa K."/>
            <person name="Fujimori K."/>
            <person name="Tanai H."/>
            <person name="Kimata M."/>
            <person name="Watanabe M."/>
            <person name="Hiraoka S."/>
            <person name="Chiba Y."/>
            <person name="Ishida S."/>
            <person name="Ono Y."/>
            <person name="Takiguchi S."/>
            <person name="Watanabe S."/>
            <person name="Yosida M."/>
            <person name="Hotuta T."/>
            <person name="Kusano J."/>
            <person name="Kanehori K."/>
            <person name="Takahashi-Fujii A."/>
            <person name="Hara H."/>
            <person name="Tanase T.-O."/>
            <person name="Nomura Y."/>
            <person name="Togiya S."/>
            <person name="Komai F."/>
            <person name="Hara R."/>
            <person name="Takeuchi K."/>
            <person name="Arita M."/>
            <person name="Imose N."/>
            <person name="Musashino K."/>
            <person name="Yuuki H."/>
            <person name="Oshima A."/>
            <person name="Sasaki N."/>
            <person name="Aotsuka S."/>
            <person name="Yoshikawa Y."/>
            <person name="Matsunawa H."/>
            <person name="Ichihara T."/>
            <person name="Shiohata N."/>
            <person name="Sano S."/>
            <person name="Moriya S."/>
            <person name="Momiyama H."/>
            <person name="Satoh N."/>
            <person name="Takami S."/>
            <person name="Terashima Y."/>
            <person name="Suzuki O."/>
            <person name="Nakagawa S."/>
            <person name="Senoh A."/>
            <person name="Mizoguchi H."/>
            <person name="Goto Y."/>
            <person name="Shimizu F."/>
            <person name="Wakebe H."/>
            <person name="Hishigaki H."/>
            <person name="Watanabe T."/>
            <person name="Sugiyama A."/>
            <person name="Takemoto M."/>
            <person name="Kawakami B."/>
            <person name="Yamazaki M."/>
            <person name="Watanabe K."/>
            <person name="Kumagai A."/>
            <person name="Itakura S."/>
            <person name="Fukuzumi Y."/>
            <person name="Fujimori Y."/>
            <person name="Komiyama M."/>
            <person name="Tashiro H."/>
            <person name="Tanigami A."/>
            <person name="Fujiwara T."/>
            <person name="Ono T."/>
            <person name="Yamada K."/>
            <person name="Fujii Y."/>
            <person name="Ozaki K."/>
            <person name="Hirao M."/>
            <person name="Ohmori Y."/>
            <person name="Kawabata A."/>
            <person name="Hikiji T."/>
            <person name="Kobatake N."/>
            <person name="Inagaki H."/>
            <person name="Ikema Y."/>
            <person name="Okamoto S."/>
            <person name="Okitani R."/>
            <person name="Kawakami T."/>
            <person name="Noguchi S."/>
            <person name="Itoh T."/>
            <person name="Shigeta K."/>
            <person name="Senba T."/>
            <person name="Matsumura K."/>
            <person name="Nakajima Y."/>
            <person name="Mizuno T."/>
            <person name="Morinaga M."/>
            <person name="Sasaki M."/>
            <person name="Togashi T."/>
            <person name="Oyama M."/>
            <person name="Hata H."/>
            <person name="Watanabe M."/>
            <person name="Komatsu T."/>
            <person name="Mizushima-Sugano J."/>
            <person name="Satoh T."/>
            <person name="Shirai Y."/>
            <person name="Takahashi Y."/>
            <person name="Nakagawa K."/>
            <person name="Okumura K."/>
            <person name="Nagase T."/>
            <person name="Nomura N."/>
            <person name="Kikuchi H."/>
            <person name="Masuho Y."/>
            <person name="Yamashita R."/>
            <person name="Nakai K."/>
            <person name="Yada T."/>
            <person name="Nakamura Y."/>
            <person name="Ohara O."/>
            <person name="Isogai T."/>
            <person name="Sugano S."/>
        </authorList>
    </citation>
    <scope>NUCLEOTIDE SEQUENCE [LARGE SCALE MRNA] (ISOFORMS 4 AND 5)</scope>
</reference>
<reference key="6">
    <citation type="journal article" date="2006" name="Nature">
        <title>The finished DNA sequence of human chromosome 12.</title>
        <authorList>
            <person name="Scherer S.E."/>
            <person name="Muzny D.M."/>
            <person name="Buhay C.J."/>
            <person name="Chen R."/>
            <person name="Cree A."/>
            <person name="Ding Y."/>
            <person name="Dugan-Rocha S."/>
            <person name="Gill R."/>
            <person name="Gunaratne P."/>
            <person name="Harris R.A."/>
            <person name="Hawes A.C."/>
            <person name="Hernandez J."/>
            <person name="Hodgson A.V."/>
            <person name="Hume J."/>
            <person name="Jackson A."/>
            <person name="Khan Z.M."/>
            <person name="Kovar-Smith C."/>
            <person name="Lewis L.R."/>
            <person name="Lozado R.J."/>
            <person name="Metzker M.L."/>
            <person name="Milosavljevic A."/>
            <person name="Miner G.R."/>
            <person name="Montgomery K.T."/>
            <person name="Morgan M.B."/>
            <person name="Nazareth L.V."/>
            <person name="Scott G."/>
            <person name="Sodergren E."/>
            <person name="Song X.-Z."/>
            <person name="Steffen D."/>
            <person name="Lovering R.C."/>
            <person name="Wheeler D.A."/>
            <person name="Worley K.C."/>
            <person name="Yuan Y."/>
            <person name="Zhang Z."/>
            <person name="Adams C.Q."/>
            <person name="Ansari-Lari M.A."/>
            <person name="Ayele M."/>
            <person name="Brown M.J."/>
            <person name="Chen G."/>
            <person name="Chen Z."/>
            <person name="Clerc-Blankenburg K.P."/>
            <person name="Davis C."/>
            <person name="Delgado O."/>
            <person name="Dinh H.H."/>
            <person name="Draper H."/>
            <person name="Gonzalez-Garay M.L."/>
            <person name="Havlak P."/>
            <person name="Jackson L.R."/>
            <person name="Jacob L.S."/>
            <person name="Kelly S.H."/>
            <person name="Li L."/>
            <person name="Li Z."/>
            <person name="Liu J."/>
            <person name="Liu W."/>
            <person name="Lu J."/>
            <person name="Maheshwari M."/>
            <person name="Nguyen B.-V."/>
            <person name="Okwuonu G.O."/>
            <person name="Pasternak S."/>
            <person name="Perez L.M."/>
            <person name="Plopper F.J.H."/>
            <person name="Santibanez J."/>
            <person name="Shen H."/>
            <person name="Tabor P.E."/>
            <person name="Verduzco D."/>
            <person name="Waldron L."/>
            <person name="Wang Q."/>
            <person name="Williams G.A."/>
            <person name="Zhang J."/>
            <person name="Zhou J."/>
            <person name="Allen C.C."/>
            <person name="Amin A.G."/>
            <person name="Anyalebechi V."/>
            <person name="Bailey M."/>
            <person name="Barbaria J.A."/>
            <person name="Bimage K.E."/>
            <person name="Bryant N.P."/>
            <person name="Burch P.E."/>
            <person name="Burkett C.E."/>
            <person name="Burrell K.L."/>
            <person name="Calderon E."/>
            <person name="Cardenas V."/>
            <person name="Carter K."/>
            <person name="Casias K."/>
            <person name="Cavazos I."/>
            <person name="Cavazos S.R."/>
            <person name="Ceasar H."/>
            <person name="Chacko J."/>
            <person name="Chan S.N."/>
            <person name="Chavez D."/>
            <person name="Christopoulos C."/>
            <person name="Chu J."/>
            <person name="Cockrell R."/>
            <person name="Cox C.D."/>
            <person name="Dang M."/>
            <person name="Dathorne S.R."/>
            <person name="David R."/>
            <person name="Davis C.M."/>
            <person name="Davy-Carroll L."/>
            <person name="Deshazo D.R."/>
            <person name="Donlin J.E."/>
            <person name="D'Souza L."/>
            <person name="Eaves K.A."/>
            <person name="Egan A."/>
            <person name="Emery-Cohen A.J."/>
            <person name="Escotto M."/>
            <person name="Flagg N."/>
            <person name="Forbes L.D."/>
            <person name="Gabisi A.M."/>
            <person name="Garza M."/>
            <person name="Hamilton C."/>
            <person name="Henderson N."/>
            <person name="Hernandez O."/>
            <person name="Hines S."/>
            <person name="Hogues M.E."/>
            <person name="Huang M."/>
            <person name="Idlebird D.G."/>
            <person name="Johnson R."/>
            <person name="Jolivet A."/>
            <person name="Jones S."/>
            <person name="Kagan R."/>
            <person name="King L.M."/>
            <person name="Leal B."/>
            <person name="Lebow H."/>
            <person name="Lee S."/>
            <person name="LeVan J.M."/>
            <person name="Lewis L.C."/>
            <person name="London P."/>
            <person name="Lorensuhewa L.M."/>
            <person name="Loulseged H."/>
            <person name="Lovett D.A."/>
            <person name="Lucier A."/>
            <person name="Lucier R.L."/>
            <person name="Ma J."/>
            <person name="Madu R.C."/>
            <person name="Mapua P."/>
            <person name="Martindale A.D."/>
            <person name="Martinez E."/>
            <person name="Massey E."/>
            <person name="Mawhiney S."/>
            <person name="Meador M.G."/>
            <person name="Mendez S."/>
            <person name="Mercado C."/>
            <person name="Mercado I.C."/>
            <person name="Merritt C.E."/>
            <person name="Miner Z.L."/>
            <person name="Minja E."/>
            <person name="Mitchell T."/>
            <person name="Mohabbat F."/>
            <person name="Mohabbat K."/>
            <person name="Montgomery B."/>
            <person name="Moore N."/>
            <person name="Morris S."/>
            <person name="Munidasa M."/>
            <person name="Ngo R.N."/>
            <person name="Nguyen N.B."/>
            <person name="Nickerson E."/>
            <person name="Nwaokelemeh O.O."/>
            <person name="Nwokenkwo S."/>
            <person name="Obregon M."/>
            <person name="Oguh M."/>
            <person name="Oragunye N."/>
            <person name="Oviedo R.J."/>
            <person name="Parish B.J."/>
            <person name="Parker D.N."/>
            <person name="Parrish J."/>
            <person name="Parks K.L."/>
            <person name="Paul H.A."/>
            <person name="Payton B.A."/>
            <person name="Perez A."/>
            <person name="Perrin W."/>
            <person name="Pickens A."/>
            <person name="Primus E.L."/>
            <person name="Pu L.-L."/>
            <person name="Puazo M."/>
            <person name="Quiles M.M."/>
            <person name="Quiroz J.B."/>
            <person name="Rabata D."/>
            <person name="Reeves K."/>
            <person name="Ruiz S.J."/>
            <person name="Shao H."/>
            <person name="Sisson I."/>
            <person name="Sonaike T."/>
            <person name="Sorelle R.P."/>
            <person name="Sutton A.E."/>
            <person name="Svatek A.F."/>
            <person name="Svetz L.A."/>
            <person name="Tamerisa K.S."/>
            <person name="Taylor T.R."/>
            <person name="Teague B."/>
            <person name="Thomas N."/>
            <person name="Thorn R.D."/>
            <person name="Trejos Z.Y."/>
            <person name="Trevino B.K."/>
            <person name="Ukegbu O.N."/>
            <person name="Urban J.B."/>
            <person name="Vasquez L.I."/>
            <person name="Vera V.A."/>
            <person name="Villasana D.M."/>
            <person name="Wang L."/>
            <person name="Ward-Moore S."/>
            <person name="Warren J.T."/>
            <person name="Wei X."/>
            <person name="White F."/>
            <person name="Williamson A.L."/>
            <person name="Wleczyk R."/>
            <person name="Wooden H.S."/>
            <person name="Wooden S.H."/>
            <person name="Yen J."/>
            <person name="Yoon L."/>
            <person name="Yoon V."/>
            <person name="Zorrilla S.E."/>
            <person name="Nelson D."/>
            <person name="Kucherlapati R."/>
            <person name="Weinstock G."/>
            <person name="Gibbs R.A."/>
        </authorList>
    </citation>
    <scope>NUCLEOTIDE SEQUENCE [LARGE SCALE GENOMIC DNA]</scope>
</reference>
<reference key="7">
    <citation type="journal article" date="2004" name="Genome Res.">
        <title>The status, quality, and expansion of the NIH full-length cDNA project: the Mammalian Gene Collection (MGC).</title>
        <authorList>
            <consortium name="The MGC Project Team"/>
        </authorList>
    </citation>
    <scope>NUCLEOTIDE SEQUENCE [LARGE SCALE MRNA] (ISOFORM 1)</scope>
    <source>
        <tissue>Brain</tissue>
        <tissue>Eye</tissue>
    </source>
</reference>
<reference key="8">
    <citation type="journal article" date="1996" name="Mol. Cell. Biol.">
        <title>Activation of signalling by the activin receptor complex.</title>
        <authorList>
            <person name="Attisano L."/>
            <person name="Wrana J.L."/>
            <person name="Montalvo E."/>
            <person name="Massague J."/>
        </authorList>
    </citation>
    <scope>INTERACTION WITH ACVR2B</scope>
    <scope>PHOSPHORYLATION BY ACVR2B</scope>
    <scope>DOMAIN GS</scope>
    <scope>MUTAGENESIS OF THR-206</scope>
</reference>
<reference key="9">
    <citation type="journal article" date="1997" name="Mol. Cell. Biol.">
        <title>Activin and inhibin have antagonistic effects on ligand-dependent heteromerization of the type I and type II activin receptors and human erythroid differentiation.</title>
        <authorList>
            <person name="Lebrun J.J."/>
            <person name="Vale W.W."/>
        </authorList>
    </citation>
    <scope>FUNCTION</scope>
    <scope>IDENTIFICATION IN A COMPLEX WITH TYPE-2 ACTIVIN RECEPTORS</scope>
</reference>
<reference key="10">
    <citation type="journal article" date="1999" name="Mol. Endocrinol.">
        <title>Roles of pathway-specific and inhibitory Smads in activin receptor signaling.</title>
        <authorList>
            <person name="Lebrun J.J."/>
            <person name="Takabe K."/>
            <person name="Chen Y."/>
            <person name="Vale W."/>
        </authorList>
    </citation>
    <scope>INTERACTION WITH SMAD2; SMAD3 AND SMAD7</scope>
    <scope>FUNCTION</scope>
</reference>
<reference key="11">
    <citation type="journal article" date="2001" name="Mol. Endocrinol.">
        <title>Modulation of activin signal transduction by inhibin B and inhibin-binding protein (INhBP).</title>
        <authorList>
            <person name="Chapman S.C."/>
            <person name="Woodruff T.K."/>
        </authorList>
    </citation>
    <scope>INTERACTION WITH IGSF1</scope>
    <scope>ACTIVITY REGULATION</scope>
</reference>
<reference key="12">
    <citation type="journal article" date="2002" name="FEBS Lett.">
        <title>Phosphorylation regulation of the interaction between Smad7 and activin type I receptor.</title>
        <authorList>
            <person name="Liu X."/>
            <person name="Nagarajan R.P."/>
            <person name="Vale W."/>
            <person name="Chen Y."/>
        </authorList>
    </citation>
    <scope>PHOSPHORYLATION</scope>
    <scope>INTERACTION WITH SMAD7</scope>
</reference>
<reference key="13">
    <citation type="journal article" date="2002" name="J. Clin. Endocrinol. Metab.">
        <title>Overexpression of wild-type activin receptor alk4-1 restores activin antiproliferative effects in human pituitary tumor cells.</title>
        <authorList>
            <person name="Danila D.C."/>
            <person name="Zhang X."/>
            <person name="Zhou Y."/>
            <person name="Haidar J.N."/>
            <person name="Klibanski A."/>
        </authorList>
    </citation>
    <scope>FUNCTION</scope>
    <scope>PHOSPHORYLATION</scope>
</reference>
<reference key="14">
    <citation type="journal article" date="2002" name="Mol. Cell. Biol.">
        <title>Cripto-1 activates nodal- and ALK4-dependent and -independent signaling pathways in mammary epithelial Cells.</title>
        <authorList>
            <person name="Bianco C."/>
            <person name="Adkins H.B."/>
            <person name="Wechselberger C."/>
            <person name="Seno M."/>
            <person name="Normanno N."/>
            <person name="De Luca A."/>
            <person name="Sun Y."/>
            <person name="Khan N."/>
            <person name="Kenney N."/>
            <person name="Ebert A."/>
            <person name="Williams K.P."/>
            <person name="Sanicola M."/>
            <person name="Salomon D.S."/>
        </authorList>
    </citation>
    <scope>INTERACTION WITH CRIPTO</scope>
    <scope>ACTIVITY REGULATION</scope>
</reference>
<reference key="15">
    <citation type="journal article" date="2002" name="Proteomics">
        <title>Identification of the phosphotyrosine proteome from thrombin activated platelets.</title>
        <authorList>
            <person name="Maguire P.B."/>
            <person name="Wynne K.J."/>
            <person name="Harney D.F."/>
            <person name="O'Donoghue N.M."/>
            <person name="Stephens G."/>
            <person name="Fitzgerald D.J."/>
        </authorList>
    </citation>
    <scope>PHOSPHORYLATION AT TYR-380</scope>
</reference>
<reference key="16">
    <citation type="journal article" date="2003" name="Endocrinology">
        <title>Activin signaling through type IB activin receptor stimulates aromatase activity in the ovarian granulosa cell-like human granulosa (KGN) cells.</title>
        <authorList>
            <person name="Mukasa C."/>
            <person name="Nomura M."/>
            <person name="Tanaka T."/>
            <person name="Tanaka K."/>
            <person name="Nishi Y."/>
            <person name="Okabe T."/>
            <person name="Goto K."/>
            <person name="Yanase T."/>
            <person name="Nawata H."/>
        </authorList>
    </citation>
    <scope>FUNCTION</scope>
</reference>
<reference key="17">
    <citation type="journal article" date="2003" name="J. Biol. Chem.">
        <title>Identification of a functional binding site for activin on the type I receptor ALK4.</title>
        <authorList>
            <person name="Harrison C.A."/>
            <person name="Gray P.C."/>
            <person name="Koerber S.C."/>
            <person name="Fischer W."/>
            <person name="Vale W."/>
        </authorList>
    </citation>
    <scope>MUTAGENESIS OF LEU-40; ILE-70; VAL-73; LEU-75 AND PRO-77</scope>
    <scope>ACTIVIN-BINDING</scope>
</reference>
<reference key="18">
    <citation type="journal article" date="2006" name="J. Mol. Endocrinol.">
        <title>FKBP12 functions as an adaptor of the Smad7-Smurf1 complex on activin type I receptor.</title>
        <authorList>
            <person name="Yamaguchi T."/>
            <person name="Kurisaki A."/>
            <person name="Yamakawa N."/>
            <person name="Minakuchi K."/>
            <person name="Sugino H."/>
        </authorList>
    </citation>
    <scope>INTERACTION WITH FKBP1A AND SMAD7</scope>
    <scope>UBIQUITINATION</scope>
</reference>
<reference key="19">
    <citation type="journal article" date="2007" name="Development">
        <title>Ttrap is an essential modulator of Smad3-dependent Nodal signaling during zebrafish gastrulation and left-right axis determination.</title>
        <authorList>
            <person name="Esguerra C.V."/>
            <person name="Nelles L."/>
            <person name="Vermeire L."/>
            <person name="Ibrahimi A."/>
            <person name="Crawford A.D."/>
            <person name="Derua R."/>
            <person name="Janssens E."/>
            <person name="Waelkens E."/>
            <person name="Carmeliet P."/>
            <person name="Collen D."/>
            <person name="Huylebroeck D."/>
        </authorList>
    </citation>
    <scope>FUNCTION</scope>
    <scope>AUTOPHOSPHORYLATION</scope>
</reference>
<reference key="20">
    <citation type="journal article" date="2010" name="Biochem. Biophys. Res. Commun.">
        <title>Activin A induces neuronal differentiation and survival via ALK4 in a SMAD-independent manner in a subpopulation of human neuroblastomas.</title>
        <authorList>
            <person name="Suzuki K."/>
            <person name="Kobayashi T."/>
            <person name="Funatsu O."/>
            <person name="Morita A."/>
            <person name="Ikekita M."/>
        </authorList>
    </citation>
    <scope>FUNCTION</scope>
</reference>
<reference key="21">
    <citation type="journal article" date="2010" name="PLoS ONE">
        <title>Development and validation of a method for profiling post-translational modification activities using protein microarrays.</title>
        <authorList>
            <person name="Del Rincon S.V."/>
            <person name="Rogers J."/>
            <person name="Widschwendter M."/>
            <person name="Sun D."/>
            <person name="Sieburg H.B."/>
            <person name="Spruck C."/>
        </authorList>
    </citation>
    <scope>UBIQUITINATION</scope>
</reference>
<reference key="22">
    <citation type="journal article" date="2011" name="Mol. Cell. Biol.">
        <title>TSC-22 promotes transforming growth factor beta-mediated cardiac myofibroblast differentiation by antagonizing Smad7 activity.</title>
        <authorList>
            <person name="Yan X."/>
            <person name="Zhang J."/>
            <person name="Pan L."/>
            <person name="Wang P."/>
            <person name="Xue H."/>
            <person name="Zhang L."/>
            <person name="Gao X."/>
            <person name="Zhao X."/>
            <person name="Ning Y."/>
            <person name="Chen Y.G."/>
        </authorList>
    </citation>
    <scope>INTERACTION WITH TSC22D1</scope>
</reference>
<reference key="23">
    <citation type="journal article" date="2011" name="J. Autoimmun.">
        <title>Activation of the activin A-ALK-Smad pathway in systemic sclerosis.</title>
        <authorList>
            <person name="Takagi K."/>
            <person name="Kawaguchi Y."/>
            <person name="Kawamoto M."/>
            <person name="Ota Y."/>
            <person name="Tochimoto A."/>
            <person name="Gono T."/>
            <person name="Katsumata Y."/>
            <person name="Takagi M."/>
            <person name="Hara M."/>
            <person name="Yamanaka H."/>
        </authorList>
    </citation>
    <scope>INVOLVEMENT IN SYSTEMIC SCLEROSIS</scope>
</reference>
<reference key="24">
    <citation type="journal article" date="2007" name="Nature">
        <title>Patterns of somatic mutation in human cancer genomes.</title>
        <authorList>
            <person name="Greenman C."/>
            <person name="Stephens P."/>
            <person name="Smith R."/>
            <person name="Dalgliesh G.L."/>
            <person name="Hunter C."/>
            <person name="Bignell G."/>
            <person name="Davies H."/>
            <person name="Teague J."/>
            <person name="Butler A."/>
            <person name="Stevens C."/>
            <person name="Edkins S."/>
            <person name="O'Meara S."/>
            <person name="Vastrik I."/>
            <person name="Schmidt E.E."/>
            <person name="Avis T."/>
            <person name="Barthorpe S."/>
            <person name="Bhamra G."/>
            <person name="Buck G."/>
            <person name="Choudhury B."/>
            <person name="Clements J."/>
            <person name="Cole J."/>
            <person name="Dicks E."/>
            <person name="Forbes S."/>
            <person name="Gray K."/>
            <person name="Halliday K."/>
            <person name="Harrison R."/>
            <person name="Hills K."/>
            <person name="Hinton J."/>
            <person name="Jenkinson A."/>
            <person name="Jones D."/>
            <person name="Menzies A."/>
            <person name="Mironenko T."/>
            <person name="Perry J."/>
            <person name="Raine K."/>
            <person name="Richardson D."/>
            <person name="Shepherd R."/>
            <person name="Small A."/>
            <person name="Tofts C."/>
            <person name="Varian J."/>
            <person name="Webb T."/>
            <person name="West S."/>
            <person name="Widaa S."/>
            <person name="Yates A."/>
            <person name="Cahill D.P."/>
            <person name="Louis D.N."/>
            <person name="Goldstraw P."/>
            <person name="Nicholson A.G."/>
            <person name="Brasseur F."/>
            <person name="Looijenga L."/>
            <person name="Weber B.L."/>
            <person name="Chiew Y.-E."/>
            <person name="DeFazio A."/>
            <person name="Greaves M.F."/>
            <person name="Green A.R."/>
            <person name="Campbell P."/>
            <person name="Birney E."/>
            <person name="Easton D.F."/>
            <person name="Chenevix-Trench G."/>
            <person name="Tan M.-H."/>
            <person name="Khoo S.K."/>
            <person name="Teh B.T."/>
            <person name="Yuen S.T."/>
            <person name="Leung S.Y."/>
            <person name="Wooster R."/>
            <person name="Futreal P.A."/>
            <person name="Stratton M.R."/>
        </authorList>
    </citation>
    <scope>VARIANT [LARGE SCALE ANALYSIS] LEU-146</scope>
    <scope>VARIANT [LARGE SCALE ANALYSIS] HIS-478 (ISOFORM 3)</scope>
</reference>
<organism>
    <name type="scientific">Homo sapiens</name>
    <name type="common">Human</name>
    <dbReference type="NCBI Taxonomy" id="9606"/>
    <lineage>
        <taxon>Eukaryota</taxon>
        <taxon>Metazoa</taxon>
        <taxon>Chordata</taxon>
        <taxon>Craniata</taxon>
        <taxon>Vertebrata</taxon>
        <taxon>Euteleostomi</taxon>
        <taxon>Mammalia</taxon>
        <taxon>Eutheria</taxon>
        <taxon>Euarchontoglires</taxon>
        <taxon>Primates</taxon>
        <taxon>Haplorrhini</taxon>
        <taxon>Catarrhini</taxon>
        <taxon>Hominidae</taxon>
        <taxon>Homo</taxon>
    </lineage>
</organism>
<evidence type="ECO:0000250" key="1"/>
<evidence type="ECO:0000250" key="2">
    <source>
        <dbReference type="UniProtKB" id="Q61271"/>
    </source>
</evidence>
<evidence type="ECO:0000255" key="3"/>
<evidence type="ECO:0000255" key="4">
    <source>
        <dbReference type="PROSITE-ProRule" id="PRU00159"/>
    </source>
</evidence>
<evidence type="ECO:0000255" key="5">
    <source>
        <dbReference type="PROSITE-ProRule" id="PRU00585"/>
    </source>
</evidence>
<evidence type="ECO:0000255" key="6">
    <source>
        <dbReference type="PROSITE-ProRule" id="PRU10027"/>
    </source>
</evidence>
<evidence type="ECO:0000269" key="7">
    <source>
    </source>
</evidence>
<evidence type="ECO:0000269" key="8">
    <source>
    </source>
</evidence>
<evidence type="ECO:0000269" key="9">
    <source>
    </source>
</evidence>
<evidence type="ECO:0000269" key="10">
    <source>
    </source>
</evidence>
<evidence type="ECO:0000269" key="11">
    <source>
    </source>
</evidence>
<evidence type="ECO:0000269" key="12">
    <source>
    </source>
</evidence>
<evidence type="ECO:0000269" key="13">
    <source>
    </source>
</evidence>
<evidence type="ECO:0000269" key="14">
    <source>
    </source>
</evidence>
<evidence type="ECO:0000269" key="15">
    <source>
    </source>
</evidence>
<evidence type="ECO:0000269" key="16">
    <source>
    </source>
</evidence>
<evidence type="ECO:0000269" key="17">
    <source>
    </source>
</evidence>
<evidence type="ECO:0000269" key="18">
    <source>
    </source>
</evidence>
<evidence type="ECO:0000269" key="19">
    <source>
    </source>
</evidence>
<evidence type="ECO:0000269" key="20">
    <source>
    </source>
</evidence>
<evidence type="ECO:0000269" key="21">
    <source>
    </source>
</evidence>
<evidence type="ECO:0000269" key="22">
    <source>
    </source>
</evidence>
<evidence type="ECO:0000269" key="23">
    <source>
    </source>
</evidence>
<evidence type="ECO:0000303" key="24">
    <source>
    </source>
</evidence>
<evidence type="ECO:0000303" key="25">
    <source>
    </source>
</evidence>
<evidence type="ECO:0000305" key="26"/>
<evidence type="ECO:0007829" key="27">
    <source>
        <dbReference type="PDB" id="7MRZ"/>
    </source>
</evidence>
<evidence type="ECO:0007829" key="28">
    <source>
        <dbReference type="PDB" id="7OLY"/>
    </source>
</evidence>
<accession>P36896</accession>
<accession>B7Z5L8</accession>
<accession>B7Z5W5</accession>
<accession>Q15479</accession>
<accession>Q15480</accession>
<accession>Q15481</accession>
<accession>Q15482</accession>
<comment type="function">
    <text evidence="11 12 16 17 20 22 23">Transmembrane serine/threonine kinase activin type-1 receptor forming an activin receptor complex with activin receptor type-2 (ACVR2A or ACVR2B). Transduces the activin signal from the cell surface to the cytoplasm and is thus regulating a many physiological and pathological processes including neuronal differentiation and neuronal survival, hair follicle development and cycling, FSH production by the pituitary gland, wound healing, extracellular matrix production, immunosuppression and carcinogenesis. Activin is also thought to have a paracrine or autocrine role in follicular development in the ovary. Within the receptor complex, type-2 receptors (ACVR2A and/or ACVR2B) act as a primary activin receptors whereas the type-1 receptors like ACVR1B act as downstream transducers of activin signals. Activin binds to type-2 receptor at the plasma membrane and activates its serine-threonine kinase. The activated receptor type-2 then phosphorylates and activates the type-1 receptor such as ACVR1B. Once activated, the type-1 receptor binds and phosphorylates the SMAD proteins SMAD2 and SMAD3, on serine residues of the C-terminal tail. Soon after their association with the activin receptor and subsequent phosphorylation, SMAD2 and SMAD3 are released into the cytoplasm where they interact with the common partner SMAD4. This SMAD complex translocates into the nucleus where it mediates activin-induced transcription. Inhibitory SMAD7, which is recruited to ACVR1B through FKBP1A, can prevent the association of SMAD2 and SMAD3 with the activin receptor complex, thereby blocking the activin signal. Activin signal transduction is also antagonized by the binding to the receptor of inhibin-B via the IGSF1 inhibin coreceptor. ACVR1B also phosphorylates TDP2.</text>
</comment>
<comment type="catalytic activity">
    <reaction>
        <text>L-threonyl-[receptor-protein] + ATP = O-phospho-L-threonyl-[receptor-protein] + ADP + H(+)</text>
        <dbReference type="Rhea" id="RHEA:44880"/>
        <dbReference type="Rhea" id="RHEA-COMP:11024"/>
        <dbReference type="Rhea" id="RHEA-COMP:11025"/>
        <dbReference type="ChEBI" id="CHEBI:15378"/>
        <dbReference type="ChEBI" id="CHEBI:30013"/>
        <dbReference type="ChEBI" id="CHEBI:30616"/>
        <dbReference type="ChEBI" id="CHEBI:61977"/>
        <dbReference type="ChEBI" id="CHEBI:456216"/>
        <dbReference type="EC" id="2.7.11.30"/>
    </reaction>
</comment>
<comment type="catalytic activity">
    <reaction>
        <text>L-seryl-[receptor-protein] + ATP = O-phospho-L-seryl-[receptor-protein] + ADP + H(+)</text>
        <dbReference type="Rhea" id="RHEA:18673"/>
        <dbReference type="Rhea" id="RHEA-COMP:11022"/>
        <dbReference type="Rhea" id="RHEA-COMP:11023"/>
        <dbReference type="ChEBI" id="CHEBI:15378"/>
        <dbReference type="ChEBI" id="CHEBI:29999"/>
        <dbReference type="ChEBI" id="CHEBI:30616"/>
        <dbReference type="ChEBI" id="CHEBI:83421"/>
        <dbReference type="ChEBI" id="CHEBI:456216"/>
        <dbReference type="EC" id="2.7.11.30"/>
    </reaction>
</comment>
<comment type="cofactor">
    <cofactor evidence="1">
        <name>Mg(2+)</name>
        <dbReference type="ChEBI" id="CHEBI:18420"/>
    </cofactor>
    <cofactor evidence="1">
        <name>Mn(2+)</name>
        <dbReference type="ChEBI" id="CHEBI:29035"/>
    </cofactor>
</comment>
<comment type="activity regulation">
    <text evidence="7 8">Activin receptor type-2 (ACVR2A or ACVR2B) activates the type-1 receptor through phosphorylation of its regulatory GS domain.</text>
</comment>
<comment type="subunit">
    <text evidence="2 7 8 9 14 19 20 21 22 23">Forms an activin receptor complex with activin receptor type-2 (ACVR2A or ACVR2B) (PubMed:8196624, PubMed:8622651, PubMed:9032295). Part of a complex consisting of MAGI2/ARIP1, ACVR2A, ACVR1B and SMAD3 (By similarity). Interacts with SMAD2 and SMAD3 (PubMed:9892009). Interacts with SMAD7 (PubMed:12023024, PubMed:16720724, PubMed:9892009). Interacts with FKBP1A (PubMed:16720724). Interacts with IGSF1 (PubMed:11266516). Interacts with CRIPTO (PubMed:11909953). Interacts with TDP2 (By similarity). Interacts with TSC22D1/TSC-22 (PubMed:21791611).</text>
</comment>
<comment type="interaction">
    <interactant intactId="EBI-1384128">
        <id>P36896</id>
    </interactant>
    <interactant intactId="EBI-1027571">
        <id>P62942</id>
        <label>FKBP1A</label>
    </interactant>
    <organismsDiffer>false</organismsDiffer>
    <experiments>2</experiments>
</comment>
<comment type="interaction">
    <interactant intactId="EBI-1384128">
        <id>P36896</id>
    </interactant>
    <interactant intactId="EBI-352572">
        <id>P08238</id>
        <label>HSP90AB1</label>
    </interactant>
    <organismsDiffer>false</organismsDiffer>
    <experiments>2</experiments>
</comment>
<comment type="interaction">
    <interactant intactId="EBI-1384128">
        <id>P36896</id>
    </interactant>
    <interactant intactId="EBI-3861591">
        <id>O15105</id>
        <label>SMAD7</label>
    </interactant>
    <organismsDiffer>false</organismsDiffer>
    <experiments>2</experiments>
</comment>
<comment type="interaction">
    <interactant intactId="EBI-1384128">
        <id>P36896</id>
    </interactant>
    <interactant intactId="EBI-8571194">
        <id>P27040</id>
        <label>Acvr2b</label>
    </interactant>
    <organismsDiffer>true</organismsDiffer>
    <experiments>4</experiments>
</comment>
<comment type="subcellular location">
    <subcellularLocation>
        <location evidence="1">Cell membrane</location>
        <topology evidence="1">Single-pass type I membrane protein</topology>
    </subcellularLocation>
</comment>
<comment type="alternative products">
    <event type="alternative splicing"/>
    <isoform>
        <id>P36896-1</id>
        <name>1</name>
        <name>SKR2-1</name>
        <sequence type="displayed"/>
    </isoform>
    <isoform>
        <id>P36896-2</id>
        <name>2</name>
        <name>SKR2-2</name>
        <sequence type="described" ref="VSP_004954"/>
    </isoform>
    <isoform>
        <id>P36896-3</id>
        <name>3</name>
        <name>SKR2-3</name>
        <sequence type="described" ref="VSP_004953"/>
    </isoform>
    <isoform>
        <id>P36896-4</id>
        <name>4</name>
        <sequence type="described" ref="VSP_041842"/>
    </isoform>
    <isoform>
        <id>P36896-5</id>
        <name>5</name>
        <sequence type="described" ref="VSP_041841"/>
    </isoform>
</comment>
<comment type="tissue specificity">
    <text>Expressed in many tissues, most strongly in kidney, pancreas, brain, lung, and liver.</text>
</comment>
<comment type="domain">
    <text evidence="21">The GS domain is a 30-amino-acid sequence adjacent to the N-terminal boundary of the kinase domain and highly conserved in all other known type-1 receptors but not in type-2 receptors. The GS domain is the site of activation through phosphorylation by the II receptors.</text>
</comment>
<comment type="PTM">
    <text evidence="9 10 11 21">Autophosphorylated. Phosphorylated by activin receptor type-2 (ACVR2A or ACVR2B) in response to activin-binding at serine and threonine residues in the GS domain. Phosphorylation of ACVR1B by activin receptor type-2 regulates association with SMAD7.</text>
</comment>
<comment type="PTM">
    <text>Ubiquitinated. Level of ubiquitination is regulated by the SMAD7-SMURF1 complex.</text>
</comment>
<comment type="PTM">
    <text>Ubiquitinated.</text>
</comment>
<comment type="disease">
    <text evidence="18">ACVRIB is abundantly expressed in systemic sclerosis patient fibroblasts and production of collagen is also induced by activin-A/INHBA. This suggests that the activin/ACRV1B signaling mechanism is involved in systemic sclerosis.</text>
</comment>
<comment type="similarity">
    <text evidence="26">Belongs to the protein kinase superfamily. TKL Ser/Thr protein kinase family. TGFB receptor subfamily.</text>
</comment>
<keyword id="KW-0002">3D-structure</keyword>
<keyword id="KW-0025">Alternative splicing</keyword>
<keyword id="KW-0067">ATP-binding</keyword>
<keyword id="KW-1003">Cell membrane</keyword>
<keyword id="KW-0325">Glycoprotein</keyword>
<keyword id="KW-0418">Kinase</keyword>
<keyword id="KW-0460">Magnesium</keyword>
<keyword id="KW-0464">Manganese</keyword>
<keyword id="KW-0472">Membrane</keyword>
<keyword id="KW-0479">Metal-binding</keyword>
<keyword id="KW-0547">Nucleotide-binding</keyword>
<keyword id="KW-0597">Phosphoprotein</keyword>
<keyword id="KW-1267">Proteomics identification</keyword>
<keyword id="KW-0675">Receptor</keyword>
<keyword id="KW-1185">Reference proteome</keyword>
<keyword id="KW-0723">Serine/threonine-protein kinase</keyword>
<keyword id="KW-0732">Signal</keyword>
<keyword id="KW-0808">Transferase</keyword>
<keyword id="KW-0812">Transmembrane</keyword>
<keyword id="KW-1133">Transmembrane helix</keyword>
<keyword id="KW-0832">Ubl conjugation</keyword>
<dbReference type="EC" id="2.7.11.30"/>
<dbReference type="EMBL" id="Z22536">
    <property type="protein sequence ID" value="CAA80258.1"/>
    <property type="molecule type" value="mRNA"/>
</dbReference>
<dbReference type="EMBL" id="U14722">
    <property type="protein sequence ID" value="AAA50246.1"/>
    <property type="molecule type" value="mRNA"/>
</dbReference>
<dbReference type="EMBL" id="L10125">
    <property type="protein sequence ID" value="AAA60555.1"/>
    <property type="molecule type" value="mRNA"/>
</dbReference>
<dbReference type="EMBL" id="L10126">
    <property type="protein sequence ID" value="AAA60556.1"/>
    <property type="molecule type" value="mRNA"/>
</dbReference>
<dbReference type="EMBL" id="L31848">
    <property type="protein sequence ID" value="AAA53349.1"/>
    <property type="molecule type" value="Genomic_DNA"/>
</dbReference>
<dbReference type="EMBL" id="L31848">
    <property type="protein sequence ID" value="AAA53350.1"/>
    <property type="molecule type" value="Genomic_DNA"/>
</dbReference>
<dbReference type="EMBL" id="L31848">
    <property type="protein sequence ID" value="AAA53351.1"/>
    <property type="molecule type" value="Genomic_DNA"/>
</dbReference>
<dbReference type="EMBL" id="BT007072">
    <property type="protein sequence ID" value="AAP35735.1"/>
    <property type="molecule type" value="mRNA"/>
</dbReference>
<dbReference type="EMBL" id="AK299120">
    <property type="protein sequence ID" value="BAH12954.1"/>
    <property type="molecule type" value="mRNA"/>
</dbReference>
<dbReference type="EMBL" id="AK299496">
    <property type="protein sequence ID" value="BAH13051.1"/>
    <property type="molecule type" value="mRNA"/>
</dbReference>
<dbReference type="EMBL" id="AC025259">
    <property type="status" value="NOT_ANNOTATED_CDS"/>
    <property type="molecule type" value="Genomic_DNA"/>
</dbReference>
<dbReference type="EMBL" id="BC000254">
    <property type="protein sequence ID" value="AAH00254.1"/>
    <property type="molecule type" value="mRNA"/>
</dbReference>
<dbReference type="EMBL" id="BC040531">
    <property type="protein sequence ID" value="AAH40531.1"/>
    <property type="molecule type" value="mRNA"/>
</dbReference>
<dbReference type="CCDS" id="CCDS44893.2">
    <molecule id="P36896-5"/>
</dbReference>
<dbReference type="CCDS" id="CCDS44894.2">
    <molecule id="P36896-4"/>
</dbReference>
<dbReference type="CCDS" id="CCDS8816.1">
    <molecule id="P36896-1"/>
</dbReference>
<dbReference type="PIR" id="I38859">
    <property type="entry name" value="I38859"/>
</dbReference>
<dbReference type="PIR" id="I80182">
    <property type="entry name" value="I80182"/>
</dbReference>
<dbReference type="PIR" id="I80183">
    <property type="entry name" value="I80183"/>
</dbReference>
<dbReference type="RefSeq" id="NP_001399707.1">
    <molecule id="P36896-5"/>
    <property type="nucleotide sequence ID" value="NM_001412778.1"/>
</dbReference>
<dbReference type="RefSeq" id="NP_001399708.1">
    <molecule id="P36896-5"/>
    <property type="nucleotide sequence ID" value="NM_001412779.1"/>
</dbReference>
<dbReference type="RefSeq" id="NP_001399709.1">
    <molecule id="P36896-5"/>
    <property type="nucleotide sequence ID" value="NM_001412780.1"/>
</dbReference>
<dbReference type="RefSeq" id="NP_001399710.1">
    <molecule id="P36896-5"/>
    <property type="nucleotide sequence ID" value="NM_001412781.1"/>
</dbReference>
<dbReference type="RefSeq" id="NP_004293.1">
    <molecule id="P36896-1"/>
    <property type="nucleotide sequence ID" value="NM_004302.5"/>
</dbReference>
<dbReference type="RefSeq" id="NP_064732.3">
    <molecule id="P36896-5"/>
    <property type="nucleotide sequence ID" value="NM_020327.3"/>
</dbReference>
<dbReference type="RefSeq" id="NP_064733.3">
    <molecule id="P36896-4"/>
    <property type="nucleotide sequence ID" value="NM_020328.3"/>
</dbReference>
<dbReference type="PDB" id="7MRZ">
    <property type="method" value="X-ray"/>
    <property type="resolution" value="3.00 A"/>
    <property type="chains" value="C=24-126"/>
</dbReference>
<dbReference type="PDB" id="7OLY">
    <property type="method" value="X-ray"/>
    <property type="resolution" value="3.27 A"/>
    <property type="chains" value="K=24-126"/>
</dbReference>
<dbReference type="PDBsum" id="7MRZ"/>
<dbReference type="PDBsum" id="7OLY"/>
<dbReference type="SMR" id="P36896"/>
<dbReference type="BioGRID" id="106606">
    <property type="interactions" value="131"/>
</dbReference>
<dbReference type="CORUM" id="P36896"/>
<dbReference type="DIP" id="DIP-427N"/>
<dbReference type="FunCoup" id="P36896">
    <property type="interactions" value="1345"/>
</dbReference>
<dbReference type="IntAct" id="P36896">
    <property type="interactions" value="67"/>
</dbReference>
<dbReference type="MINT" id="P36896"/>
<dbReference type="STRING" id="9606.ENSP00000442656"/>
<dbReference type="BindingDB" id="P36896"/>
<dbReference type="ChEMBL" id="CHEMBL5310"/>
<dbReference type="DrugBank" id="DB00171">
    <property type="generic name" value="ATP"/>
</dbReference>
<dbReference type="DrugBank" id="DB12010">
    <property type="generic name" value="Fostamatinib"/>
</dbReference>
<dbReference type="DrugBank" id="DB12118">
    <property type="generic name" value="Sotatercept"/>
</dbReference>
<dbReference type="DrugCentral" id="P36896"/>
<dbReference type="GuidetoPHARMACOLOGY" id="1787"/>
<dbReference type="GlyCosmos" id="P36896">
    <property type="glycosylation" value="1 site, No reported glycans"/>
</dbReference>
<dbReference type="GlyGen" id="P36896">
    <property type="glycosylation" value="2 sites, 1 O-linked glycan (1 site)"/>
</dbReference>
<dbReference type="iPTMnet" id="P36896"/>
<dbReference type="PhosphoSitePlus" id="P36896"/>
<dbReference type="BioMuta" id="ACVR1B"/>
<dbReference type="DMDM" id="547775"/>
<dbReference type="jPOST" id="P36896"/>
<dbReference type="MassIVE" id="P36896"/>
<dbReference type="PaxDb" id="9606-ENSP00000442656"/>
<dbReference type="PeptideAtlas" id="P36896"/>
<dbReference type="ProteomicsDB" id="55229">
    <molecule id="P36896-1"/>
</dbReference>
<dbReference type="ProteomicsDB" id="55230">
    <molecule id="P36896-2"/>
</dbReference>
<dbReference type="ProteomicsDB" id="55231">
    <molecule id="P36896-3"/>
</dbReference>
<dbReference type="ProteomicsDB" id="55232">
    <molecule id="P36896-4"/>
</dbReference>
<dbReference type="ProteomicsDB" id="55233">
    <molecule id="P36896-5"/>
</dbReference>
<dbReference type="Antibodypedia" id="14450">
    <property type="antibodies" value="540 antibodies from 37 providers"/>
</dbReference>
<dbReference type="DNASU" id="91"/>
<dbReference type="Ensembl" id="ENST00000257963.9">
    <molecule id="P36896-1"/>
    <property type="protein sequence ID" value="ENSP00000257963.4"/>
    <property type="gene ID" value="ENSG00000135503.13"/>
</dbReference>
<dbReference type="Ensembl" id="ENST00000415850.6">
    <molecule id="P36896-3"/>
    <property type="protein sequence ID" value="ENSP00000397550.2"/>
    <property type="gene ID" value="ENSG00000135503.13"/>
</dbReference>
<dbReference type="Ensembl" id="ENST00000426655.6">
    <molecule id="P36896-2"/>
    <property type="protein sequence ID" value="ENSP00000390477.2"/>
    <property type="gene ID" value="ENSG00000135503.13"/>
</dbReference>
<dbReference type="Ensembl" id="ENST00000541224.5">
    <molecule id="P36896-4"/>
    <property type="protein sequence ID" value="ENSP00000442656.1"/>
    <property type="gene ID" value="ENSG00000135503.13"/>
</dbReference>
<dbReference type="Ensembl" id="ENST00000542485.1">
    <molecule id="P36896-5"/>
    <property type="protein sequence ID" value="ENSP00000442885.1"/>
    <property type="gene ID" value="ENSG00000135503.13"/>
</dbReference>
<dbReference type="GeneID" id="91"/>
<dbReference type="KEGG" id="hsa:91"/>
<dbReference type="MANE-Select" id="ENST00000257963.9">
    <property type="protein sequence ID" value="ENSP00000257963.4"/>
    <property type="RefSeq nucleotide sequence ID" value="NM_004302.5"/>
    <property type="RefSeq protein sequence ID" value="NP_004293.1"/>
</dbReference>
<dbReference type="UCSC" id="uc001rzl.4">
    <molecule id="P36896-1"/>
    <property type="organism name" value="human"/>
</dbReference>
<dbReference type="AGR" id="HGNC:172"/>
<dbReference type="CTD" id="91"/>
<dbReference type="DisGeNET" id="91"/>
<dbReference type="GeneCards" id="ACVR1B"/>
<dbReference type="HGNC" id="HGNC:172">
    <property type="gene designation" value="ACVR1B"/>
</dbReference>
<dbReference type="HPA" id="ENSG00000135503">
    <property type="expression patterns" value="Low tissue specificity"/>
</dbReference>
<dbReference type="MalaCards" id="ACVR1B"/>
<dbReference type="MIM" id="601300">
    <property type="type" value="gene"/>
</dbReference>
<dbReference type="neXtProt" id="NX_P36896"/>
<dbReference type="OpenTargets" id="ENSG00000135503"/>
<dbReference type="PharmGKB" id="PA24493"/>
<dbReference type="VEuPathDB" id="HostDB:ENSG00000135503"/>
<dbReference type="eggNOG" id="KOG2052">
    <property type="taxonomic scope" value="Eukaryota"/>
</dbReference>
<dbReference type="GeneTree" id="ENSGT00940000157032"/>
<dbReference type="HOGENOM" id="CLU_000288_8_1_1"/>
<dbReference type="InParanoid" id="P36896"/>
<dbReference type="OMA" id="HVRNTHC"/>
<dbReference type="OrthoDB" id="69842at2759"/>
<dbReference type="PAN-GO" id="P36896">
    <property type="GO annotations" value="7 GO annotations based on evolutionary models"/>
</dbReference>
<dbReference type="PhylomeDB" id="P36896"/>
<dbReference type="TreeFam" id="TF314724"/>
<dbReference type="BRENDA" id="2.7.10.2">
    <property type="organism ID" value="2681"/>
</dbReference>
<dbReference type="PathwayCommons" id="P36896"/>
<dbReference type="Reactome" id="R-HSA-1181150">
    <property type="pathway name" value="Signaling by NODAL"/>
</dbReference>
<dbReference type="Reactome" id="R-HSA-1433617">
    <property type="pathway name" value="Regulation of signaling by NODAL"/>
</dbReference>
<dbReference type="Reactome" id="R-HSA-1502540">
    <property type="pathway name" value="Signaling by Activin"/>
</dbReference>
<dbReference type="SignaLink" id="P36896"/>
<dbReference type="SIGNOR" id="P36896"/>
<dbReference type="BioGRID-ORCS" id="91">
    <property type="hits" value="23 hits in 1208 CRISPR screens"/>
</dbReference>
<dbReference type="ChiTaRS" id="ACVR1B">
    <property type="organism name" value="human"/>
</dbReference>
<dbReference type="GeneWiki" id="ACVR1B"/>
<dbReference type="GenomeRNAi" id="91"/>
<dbReference type="Pharos" id="P36896">
    <property type="development level" value="Tchem"/>
</dbReference>
<dbReference type="PRO" id="PR:P36896"/>
<dbReference type="Proteomes" id="UP000005640">
    <property type="component" value="Chromosome 12"/>
</dbReference>
<dbReference type="RNAct" id="P36896">
    <property type="molecule type" value="protein"/>
</dbReference>
<dbReference type="Bgee" id="ENSG00000135503">
    <property type="expression patterns" value="Expressed in secondary oocyte and 205 other cell types or tissues"/>
</dbReference>
<dbReference type="ExpressionAtlas" id="P36896">
    <property type="expression patterns" value="baseline and differential"/>
</dbReference>
<dbReference type="GO" id="GO:0048179">
    <property type="term" value="C:activin receptor complex"/>
    <property type="evidence" value="ECO:0000314"/>
    <property type="project" value="BHF-UCL"/>
</dbReference>
<dbReference type="GO" id="GO:0009986">
    <property type="term" value="C:cell surface"/>
    <property type="evidence" value="ECO:0000314"/>
    <property type="project" value="HGNC-UCL"/>
</dbReference>
<dbReference type="GO" id="GO:0005886">
    <property type="term" value="C:plasma membrane"/>
    <property type="evidence" value="ECO:0000314"/>
    <property type="project" value="HGNC-UCL"/>
</dbReference>
<dbReference type="GO" id="GO:0043235">
    <property type="term" value="C:receptor complex"/>
    <property type="evidence" value="ECO:0000314"/>
    <property type="project" value="BHF-UCL"/>
</dbReference>
<dbReference type="GO" id="GO:0048185">
    <property type="term" value="F:activin binding"/>
    <property type="evidence" value="ECO:0007669"/>
    <property type="project" value="Ensembl"/>
</dbReference>
<dbReference type="GO" id="GO:0017002">
    <property type="term" value="F:activin receptor activity"/>
    <property type="evidence" value="ECO:0000314"/>
    <property type="project" value="ARUK-UCL"/>
</dbReference>
<dbReference type="GO" id="GO:0016361">
    <property type="term" value="F:activin receptor activity, type I"/>
    <property type="evidence" value="ECO:0000314"/>
    <property type="project" value="UniProtKB"/>
</dbReference>
<dbReference type="GO" id="GO:0005524">
    <property type="term" value="F:ATP binding"/>
    <property type="evidence" value="ECO:0000314"/>
    <property type="project" value="HGNC-UCL"/>
</dbReference>
<dbReference type="GO" id="GO:0070411">
    <property type="term" value="F:I-SMAD binding"/>
    <property type="evidence" value="ECO:0000353"/>
    <property type="project" value="BHF-UCL"/>
</dbReference>
<dbReference type="GO" id="GO:0034711">
    <property type="term" value="F:inhibin binding"/>
    <property type="evidence" value="ECO:0000353"/>
    <property type="project" value="BHF-UCL"/>
</dbReference>
<dbReference type="GO" id="GO:0046872">
    <property type="term" value="F:metal ion binding"/>
    <property type="evidence" value="ECO:0007669"/>
    <property type="project" value="UniProtKB-KW"/>
</dbReference>
<dbReference type="GO" id="GO:0004674">
    <property type="term" value="F:protein serine/threonine kinase activity"/>
    <property type="evidence" value="ECO:0000314"/>
    <property type="project" value="UniProtKB"/>
</dbReference>
<dbReference type="GO" id="GO:0046332">
    <property type="term" value="F:SMAD binding"/>
    <property type="evidence" value="ECO:0000314"/>
    <property type="project" value="HGNC-UCL"/>
</dbReference>
<dbReference type="GO" id="GO:0004675">
    <property type="term" value="F:transmembrane receptor protein serine/threonine kinase activity"/>
    <property type="evidence" value="ECO:0000303"/>
    <property type="project" value="HGNC-UCL"/>
</dbReference>
<dbReference type="GO" id="GO:0031625">
    <property type="term" value="F:ubiquitin protein ligase binding"/>
    <property type="evidence" value="ECO:0000353"/>
    <property type="project" value="BHF-UCL"/>
</dbReference>
<dbReference type="GO" id="GO:0032924">
    <property type="term" value="P:activin receptor signaling pathway"/>
    <property type="evidence" value="ECO:0000314"/>
    <property type="project" value="UniProtKB"/>
</dbReference>
<dbReference type="GO" id="GO:0007178">
    <property type="term" value="P:cell surface receptor protein serine/threonine kinase signaling pathway"/>
    <property type="evidence" value="ECO:0000304"/>
    <property type="project" value="ProtInc"/>
</dbReference>
<dbReference type="GO" id="GO:0071363">
    <property type="term" value="P:cellular response to growth factor stimulus"/>
    <property type="evidence" value="ECO:0000318"/>
    <property type="project" value="GO_Central"/>
</dbReference>
<dbReference type="GO" id="GO:0097191">
    <property type="term" value="P:extrinsic apoptotic signaling pathway"/>
    <property type="evidence" value="ECO:0000315"/>
    <property type="project" value="BHF-UCL"/>
</dbReference>
<dbReference type="GO" id="GO:0000082">
    <property type="term" value="P:G1/S transition of mitotic cell cycle"/>
    <property type="evidence" value="ECO:0000314"/>
    <property type="project" value="HGNC-UCL"/>
</dbReference>
<dbReference type="GO" id="GO:0001942">
    <property type="term" value="P:hair follicle development"/>
    <property type="evidence" value="ECO:0007669"/>
    <property type="project" value="Ensembl"/>
</dbReference>
<dbReference type="GO" id="GO:0001701">
    <property type="term" value="P:in utero embryonic development"/>
    <property type="evidence" value="ECO:0007669"/>
    <property type="project" value="Ensembl"/>
</dbReference>
<dbReference type="GO" id="GO:0045596">
    <property type="term" value="P:negative regulation of cell differentiation"/>
    <property type="evidence" value="ECO:0000250"/>
    <property type="project" value="UniProt"/>
</dbReference>
<dbReference type="GO" id="GO:0030308">
    <property type="term" value="P:negative regulation of cell growth"/>
    <property type="evidence" value="ECO:0000314"/>
    <property type="project" value="HGNC-UCL"/>
</dbReference>
<dbReference type="GO" id="GO:0010629">
    <property type="term" value="P:negative regulation of gene expression"/>
    <property type="evidence" value="ECO:0007669"/>
    <property type="project" value="Ensembl"/>
</dbReference>
<dbReference type="GO" id="GO:0030279">
    <property type="term" value="P:negative regulation of ossification"/>
    <property type="evidence" value="ECO:0000314"/>
    <property type="project" value="UniProt"/>
</dbReference>
<dbReference type="GO" id="GO:0007399">
    <property type="term" value="P:nervous system development"/>
    <property type="evidence" value="ECO:0000318"/>
    <property type="project" value="GO_Central"/>
</dbReference>
<dbReference type="GO" id="GO:0038092">
    <property type="term" value="P:nodal signaling pathway"/>
    <property type="evidence" value="ECO:0000316"/>
    <property type="project" value="UniProtKB"/>
</dbReference>
<dbReference type="GO" id="GO:0018107">
    <property type="term" value="P:peptidyl-threonine phosphorylation"/>
    <property type="evidence" value="ECO:0000314"/>
    <property type="project" value="UniProtKB"/>
</dbReference>
<dbReference type="GO" id="GO:0032927">
    <property type="term" value="P:positive regulation of activin receptor signaling pathway"/>
    <property type="evidence" value="ECO:0000314"/>
    <property type="project" value="BHF-UCL"/>
</dbReference>
<dbReference type="GO" id="GO:0045648">
    <property type="term" value="P:positive regulation of erythrocyte differentiation"/>
    <property type="evidence" value="ECO:0000314"/>
    <property type="project" value="HGNC-UCL"/>
</dbReference>
<dbReference type="GO" id="GO:0010628">
    <property type="term" value="P:positive regulation of gene expression"/>
    <property type="evidence" value="ECO:0007669"/>
    <property type="project" value="Ensembl"/>
</dbReference>
<dbReference type="GO" id="GO:1901165">
    <property type="term" value="P:positive regulation of trophoblast cell migration"/>
    <property type="evidence" value="ECO:0000314"/>
    <property type="project" value="BHF-UCL"/>
</dbReference>
<dbReference type="GO" id="GO:0046777">
    <property type="term" value="P:protein autophosphorylation"/>
    <property type="evidence" value="ECO:0000314"/>
    <property type="project" value="UniProtKB"/>
</dbReference>
<dbReference type="GO" id="GO:0006355">
    <property type="term" value="P:regulation of DNA-templated transcription"/>
    <property type="evidence" value="ECO:0000314"/>
    <property type="project" value="HGNC-UCL"/>
</dbReference>
<dbReference type="GO" id="GO:0007165">
    <property type="term" value="P:signal transduction"/>
    <property type="evidence" value="ECO:0000314"/>
    <property type="project" value="HGNC-UCL"/>
</dbReference>
<dbReference type="CDD" id="cd14143">
    <property type="entry name" value="STKc_TGFbR1_ACVR1b_ACVR1c"/>
    <property type="match status" value="1"/>
</dbReference>
<dbReference type="CDD" id="cd23536">
    <property type="entry name" value="TFP_LU_ECD_ALK4"/>
    <property type="match status" value="1"/>
</dbReference>
<dbReference type="FunFam" id="1.10.510.10:FF:000045">
    <property type="entry name" value="Receptor protein serine/threonine kinase"/>
    <property type="match status" value="1"/>
</dbReference>
<dbReference type="FunFam" id="2.10.60.10:FF:000010">
    <property type="entry name" value="Receptor protein serine/threonine kinase"/>
    <property type="match status" value="1"/>
</dbReference>
<dbReference type="FunFam" id="3.30.200.20:FF:000023">
    <property type="entry name" value="Receptor protein serine/threonine kinase"/>
    <property type="match status" value="1"/>
</dbReference>
<dbReference type="Gene3D" id="2.10.60.10">
    <property type="entry name" value="CD59"/>
    <property type="match status" value="1"/>
</dbReference>
<dbReference type="Gene3D" id="3.30.200.20">
    <property type="entry name" value="Phosphorylase Kinase, domain 1"/>
    <property type="match status" value="1"/>
</dbReference>
<dbReference type="Gene3D" id="1.10.510.10">
    <property type="entry name" value="Transferase(Phosphotransferase) domain 1"/>
    <property type="match status" value="1"/>
</dbReference>
<dbReference type="InterPro" id="IPR000472">
    <property type="entry name" value="Activin_recp"/>
</dbReference>
<dbReference type="InterPro" id="IPR003605">
    <property type="entry name" value="GS_dom"/>
</dbReference>
<dbReference type="InterPro" id="IPR011009">
    <property type="entry name" value="Kinase-like_dom_sf"/>
</dbReference>
<dbReference type="InterPro" id="IPR000719">
    <property type="entry name" value="Prot_kinase_dom"/>
</dbReference>
<dbReference type="InterPro" id="IPR017441">
    <property type="entry name" value="Protein_kinase_ATP_BS"/>
</dbReference>
<dbReference type="InterPro" id="IPR008271">
    <property type="entry name" value="Ser/Thr_kinase_AS"/>
</dbReference>
<dbReference type="InterPro" id="IPR045860">
    <property type="entry name" value="Snake_toxin-like_sf"/>
</dbReference>
<dbReference type="InterPro" id="IPR000333">
    <property type="entry name" value="TGFB_receptor"/>
</dbReference>
<dbReference type="PANTHER" id="PTHR23255:SF22">
    <property type="entry name" value="ACTIVIN RECEPTOR TYPE-1B"/>
    <property type="match status" value="1"/>
</dbReference>
<dbReference type="PANTHER" id="PTHR23255">
    <property type="entry name" value="TRANSFORMING GROWTH FACTOR-BETA RECEPTOR TYPE I AND II"/>
    <property type="match status" value="1"/>
</dbReference>
<dbReference type="Pfam" id="PF01064">
    <property type="entry name" value="Activin_recp"/>
    <property type="match status" value="1"/>
</dbReference>
<dbReference type="Pfam" id="PF00069">
    <property type="entry name" value="Pkinase"/>
    <property type="match status" value="1"/>
</dbReference>
<dbReference type="Pfam" id="PF08515">
    <property type="entry name" value="TGF_beta_GS"/>
    <property type="match status" value="1"/>
</dbReference>
<dbReference type="SMART" id="SM00467">
    <property type="entry name" value="GS"/>
    <property type="match status" value="1"/>
</dbReference>
<dbReference type="SMART" id="SM00220">
    <property type="entry name" value="S_TKc"/>
    <property type="match status" value="1"/>
</dbReference>
<dbReference type="SUPFAM" id="SSF56112">
    <property type="entry name" value="Protein kinase-like (PK-like)"/>
    <property type="match status" value="1"/>
</dbReference>
<dbReference type="SUPFAM" id="SSF57302">
    <property type="entry name" value="Snake toxin-like"/>
    <property type="match status" value="1"/>
</dbReference>
<dbReference type="PROSITE" id="PS51256">
    <property type="entry name" value="GS"/>
    <property type="match status" value="1"/>
</dbReference>
<dbReference type="PROSITE" id="PS00107">
    <property type="entry name" value="PROTEIN_KINASE_ATP"/>
    <property type="match status" value="1"/>
</dbReference>
<dbReference type="PROSITE" id="PS50011">
    <property type="entry name" value="PROTEIN_KINASE_DOM"/>
    <property type="match status" value="1"/>
</dbReference>
<dbReference type="PROSITE" id="PS00108">
    <property type="entry name" value="PROTEIN_KINASE_ST"/>
    <property type="match status" value="1"/>
</dbReference>
<proteinExistence type="evidence at protein level"/>
<protein>
    <recommendedName>
        <fullName>Activin receptor type-1B</fullName>
        <ecNumber>2.7.11.30</ecNumber>
    </recommendedName>
    <alternativeName>
        <fullName>Activin receptor type IB</fullName>
        <shortName>ACTR-IB</shortName>
    </alternativeName>
    <alternativeName>
        <fullName>Activin receptor-like kinase 4</fullName>
        <shortName>ALK-4</shortName>
    </alternativeName>
    <alternativeName>
        <fullName>Serine/threonine-protein kinase receptor R2</fullName>
        <shortName>SKR2</shortName>
    </alternativeName>
</protein>
<name>ACV1B_HUMAN</name>